<organism>
    <name type="scientific">Methanosarcina barkeri (strain Fusaro / DSM 804)</name>
    <dbReference type="NCBI Taxonomy" id="269797"/>
    <lineage>
        <taxon>Archaea</taxon>
        <taxon>Methanobacteriati</taxon>
        <taxon>Methanobacteriota</taxon>
        <taxon>Stenosarchaea group</taxon>
        <taxon>Methanomicrobia</taxon>
        <taxon>Methanosarcinales</taxon>
        <taxon>Methanosarcinaceae</taxon>
        <taxon>Methanosarcina</taxon>
    </lineage>
</organism>
<dbReference type="EMBL" id="CP000099">
    <property type="protein sequence ID" value="AAZ69180.1"/>
    <property type="molecule type" value="Genomic_DNA"/>
</dbReference>
<dbReference type="SMR" id="Q46G12"/>
<dbReference type="STRING" id="269797.Mbar_A0196"/>
<dbReference type="PaxDb" id="269797-Mbar_A0196"/>
<dbReference type="KEGG" id="mba:Mbar_A0196"/>
<dbReference type="eggNOG" id="arCOG04270">
    <property type="taxonomic scope" value="Archaea"/>
</dbReference>
<dbReference type="HOGENOM" id="CLU_100097_0_0_2"/>
<dbReference type="OrthoDB" id="5935at2157"/>
<dbReference type="GO" id="GO:0003677">
    <property type="term" value="F:DNA binding"/>
    <property type="evidence" value="ECO:0007669"/>
    <property type="project" value="UniProtKB-KW"/>
</dbReference>
<dbReference type="GO" id="GO:0006355">
    <property type="term" value="P:regulation of DNA-templated transcription"/>
    <property type="evidence" value="ECO:0007669"/>
    <property type="project" value="InterPro"/>
</dbReference>
<dbReference type="GO" id="GO:0006367">
    <property type="term" value="P:transcription initiation at RNA polymerase II promoter"/>
    <property type="evidence" value="ECO:0007669"/>
    <property type="project" value="InterPro"/>
</dbReference>
<dbReference type="Gene3D" id="1.10.10.10">
    <property type="entry name" value="Winged helix-like DNA-binding domain superfamily/Winged helix DNA-binding domain"/>
    <property type="match status" value="1"/>
</dbReference>
<dbReference type="HAMAP" id="MF_01909">
    <property type="entry name" value="TFE_arch"/>
    <property type="match status" value="1"/>
</dbReference>
<dbReference type="InterPro" id="IPR016481">
    <property type="entry name" value="TF_E_archaea"/>
</dbReference>
<dbReference type="InterPro" id="IPR039997">
    <property type="entry name" value="TFE"/>
</dbReference>
<dbReference type="InterPro" id="IPR017919">
    <property type="entry name" value="TFIIE/TFIIEa_HTH"/>
</dbReference>
<dbReference type="InterPro" id="IPR002853">
    <property type="entry name" value="TFIIE_asu"/>
</dbReference>
<dbReference type="InterPro" id="IPR024550">
    <property type="entry name" value="TFIIEa/SarR/Rpc3_HTH_dom"/>
</dbReference>
<dbReference type="InterPro" id="IPR036388">
    <property type="entry name" value="WH-like_DNA-bd_sf"/>
</dbReference>
<dbReference type="InterPro" id="IPR036390">
    <property type="entry name" value="WH_DNA-bd_sf"/>
</dbReference>
<dbReference type="PANTHER" id="PTHR13097:SF7">
    <property type="entry name" value="GENERAL TRANSCRIPTION FACTOR IIE SUBUNIT 1"/>
    <property type="match status" value="1"/>
</dbReference>
<dbReference type="PANTHER" id="PTHR13097">
    <property type="entry name" value="TRANSCRIPTION INITIATION FACTOR IIE, ALPHA SUBUNIT"/>
    <property type="match status" value="1"/>
</dbReference>
<dbReference type="Pfam" id="PF02002">
    <property type="entry name" value="TFIIE_alpha"/>
    <property type="match status" value="1"/>
</dbReference>
<dbReference type="PIRSF" id="PIRSF006373">
    <property type="entry name" value="TF_E_archaea"/>
    <property type="match status" value="1"/>
</dbReference>
<dbReference type="SMART" id="SM00531">
    <property type="entry name" value="TFIIE"/>
    <property type="match status" value="1"/>
</dbReference>
<dbReference type="SUPFAM" id="SSF46785">
    <property type="entry name" value="Winged helix' DNA-binding domain"/>
    <property type="match status" value="1"/>
</dbReference>
<dbReference type="PROSITE" id="PS51344">
    <property type="entry name" value="HTH_TFE_IIE"/>
    <property type="match status" value="1"/>
</dbReference>
<evidence type="ECO:0000255" key="1">
    <source>
        <dbReference type="HAMAP-Rule" id="MF_01909"/>
    </source>
</evidence>
<feature type="chain" id="PRO_0000326609" description="Transcription factor E">
    <location>
        <begin position="1"/>
        <end position="164"/>
    </location>
</feature>
<feature type="domain" description="HTH TFE/IIEalpha-type" evidence="1">
    <location>
        <begin position="5"/>
        <end position="87"/>
    </location>
</feature>
<sequence>MVDLNDKVIRGYLLSLVGEDGLQMIEKMPEGEVTDEEIAAKTEVLLNTVRRTLFILNENKFAICRRERDSNSGWLTYLWRLDFSDIEHQLMKEKKKLLRNLKTRLEFEENNVFYMCPQGCVRLLFDEATETEFLCPMCGEDLVFYDNSHFIDVLRKRVDALSSA</sequence>
<proteinExistence type="inferred from homology"/>
<protein>
    <recommendedName>
        <fullName evidence="1">Transcription factor E</fullName>
        <shortName evidence="1">TFE</shortName>
    </recommendedName>
    <alternativeName>
        <fullName evidence="1">TFIIE subunit alpha homolog</fullName>
    </alternativeName>
    <alternativeName>
        <fullName evidence="1">Transcription initiation factor TFIIE</fullName>
    </alternativeName>
</protein>
<reference key="1">
    <citation type="journal article" date="2006" name="J. Bacteriol.">
        <title>The Methanosarcina barkeri genome: comparative analysis with Methanosarcina acetivorans and Methanosarcina mazei reveals extensive rearrangement within methanosarcinal genomes.</title>
        <authorList>
            <person name="Maeder D.L."/>
            <person name="Anderson I."/>
            <person name="Brettin T.S."/>
            <person name="Bruce D.C."/>
            <person name="Gilna P."/>
            <person name="Han C.S."/>
            <person name="Lapidus A."/>
            <person name="Metcalf W.W."/>
            <person name="Saunders E."/>
            <person name="Tapia R."/>
            <person name="Sowers K.R."/>
        </authorList>
    </citation>
    <scope>NUCLEOTIDE SEQUENCE [LARGE SCALE GENOMIC DNA]</scope>
    <source>
        <strain>Fusaro / DSM 804</strain>
    </source>
</reference>
<keyword id="KW-0238">DNA-binding</keyword>
<keyword id="KW-0804">Transcription</keyword>
<keyword id="KW-0805">Transcription regulation</keyword>
<name>TFE_METBF</name>
<gene>
    <name evidence="1" type="primary">tfe</name>
    <name type="ordered locus">Mbar_A0196</name>
</gene>
<accession>Q46G12</accession>
<comment type="function">
    <text evidence="1">Transcription factor that plays a role in the activation of archaeal genes transcribed by RNA polymerase. Facilitates transcription initiation by enhancing TATA-box recognition by TATA-box-binding protein (Tbp), and transcription factor B (Tfb) and RNA polymerase recruitment. Not absolutely required for transcription in vitro, but particularly important in cases where Tbp or Tfb function is not optimal. It dynamically alters the nucleic acid-binding properties of RNA polymerases by stabilizing the initiation complex and destabilizing elongation complexes. Seems to translocate with the RNA polymerase following initiation and acts by binding to the non template strand of the transcription bubble in elongation complexes.</text>
</comment>
<comment type="subunit">
    <text evidence="1">Monomer. Interaction with RNA polymerase subunits RpoF and RpoE is necessary for Tfe stimulatory transcription activity. Able to interact with Tbp and RNA polymerase in the absence of DNA promoter. Interacts both with the preinitiation and elongation complexes.</text>
</comment>
<comment type="domain">
    <text evidence="1">The winged helix domain is involved in binding to DNA in the preinitiation complex.</text>
</comment>
<comment type="similarity">
    <text evidence="1">Belongs to the TFE family.</text>
</comment>